<dbReference type="EMBL" id="CP000908">
    <property type="protein sequence ID" value="ABY30469.1"/>
    <property type="molecule type" value="Genomic_DNA"/>
</dbReference>
<dbReference type="RefSeq" id="WP_003598033.1">
    <property type="nucleotide sequence ID" value="NC_010172.1"/>
</dbReference>
<dbReference type="SMR" id="A9W4G3"/>
<dbReference type="KEGG" id="mex:Mext_2073"/>
<dbReference type="eggNOG" id="COG0052">
    <property type="taxonomic scope" value="Bacteria"/>
</dbReference>
<dbReference type="HOGENOM" id="CLU_040318_2_1_5"/>
<dbReference type="BioCyc" id="MEXT419610:MEXT_RS10465-MONOMER"/>
<dbReference type="GO" id="GO:0022627">
    <property type="term" value="C:cytosolic small ribosomal subunit"/>
    <property type="evidence" value="ECO:0007669"/>
    <property type="project" value="TreeGrafter"/>
</dbReference>
<dbReference type="GO" id="GO:0003735">
    <property type="term" value="F:structural constituent of ribosome"/>
    <property type="evidence" value="ECO:0007669"/>
    <property type="project" value="InterPro"/>
</dbReference>
<dbReference type="GO" id="GO:0006412">
    <property type="term" value="P:translation"/>
    <property type="evidence" value="ECO:0007669"/>
    <property type="project" value="UniProtKB-UniRule"/>
</dbReference>
<dbReference type="CDD" id="cd01425">
    <property type="entry name" value="RPS2"/>
    <property type="match status" value="1"/>
</dbReference>
<dbReference type="FunFam" id="1.10.287.610:FF:000001">
    <property type="entry name" value="30S ribosomal protein S2"/>
    <property type="match status" value="1"/>
</dbReference>
<dbReference type="Gene3D" id="1.10.150.20">
    <property type="entry name" value="5' to 3' exonuclease, C-terminal subdomain"/>
    <property type="match status" value="1"/>
</dbReference>
<dbReference type="Gene3D" id="3.40.50.10490">
    <property type="entry name" value="Glucose-6-phosphate isomerase like protein, domain 1"/>
    <property type="match status" value="1"/>
</dbReference>
<dbReference type="Gene3D" id="1.10.287.610">
    <property type="entry name" value="Helix hairpin bin"/>
    <property type="match status" value="1"/>
</dbReference>
<dbReference type="HAMAP" id="MF_00291_B">
    <property type="entry name" value="Ribosomal_uS2_B"/>
    <property type="match status" value="1"/>
</dbReference>
<dbReference type="InterPro" id="IPR001865">
    <property type="entry name" value="Ribosomal_uS2"/>
</dbReference>
<dbReference type="InterPro" id="IPR005706">
    <property type="entry name" value="Ribosomal_uS2_bac/mit/plastid"/>
</dbReference>
<dbReference type="InterPro" id="IPR018130">
    <property type="entry name" value="Ribosomal_uS2_CS"/>
</dbReference>
<dbReference type="InterPro" id="IPR023591">
    <property type="entry name" value="Ribosomal_uS2_flav_dom_sf"/>
</dbReference>
<dbReference type="NCBIfam" id="NF008966">
    <property type="entry name" value="PRK12311.1"/>
    <property type="match status" value="1"/>
</dbReference>
<dbReference type="NCBIfam" id="TIGR01011">
    <property type="entry name" value="rpsB_bact"/>
    <property type="match status" value="1"/>
</dbReference>
<dbReference type="PANTHER" id="PTHR12534">
    <property type="entry name" value="30S RIBOSOMAL PROTEIN S2 PROKARYOTIC AND ORGANELLAR"/>
    <property type="match status" value="1"/>
</dbReference>
<dbReference type="PANTHER" id="PTHR12534:SF0">
    <property type="entry name" value="SMALL RIBOSOMAL SUBUNIT PROTEIN US2M"/>
    <property type="match status" value="1"/>
</dbReference>
<dbReference type="Pfam" id="PF00318">
    <property type="entry name" value="Ribosomal_S2"/>
    <property type="match status" value="1"/>
</dbReference>
<dbReference type="PRINTS" id="PR00395">
    <property type="entry name" value="RIBOSOMALS2"/>
</dbReference>
<dbReference type="SUPFAM" id="SSF52313">
    <property type="entry name" value="Ribosomal protein S2"/>
    <property type="match status" value="1"/>
</dbReference>
<dbReference type="PROSITE" id="PS00962">
    <property type="entry name" value="RIBOSOMAL_S2_1"/>
    <property type="match status" value="1"/>
</dbReference>
<dbReference type="PROSITE" id="PS00963">
    <property type="entry name" value="RIBOSOMAL_S2_2"/>
    <property type="match status" value="1"/>
</dbReference>
<accession>A9W4G3</accession>
<gene>
    <name evidence="1" type="primary">rpsB</name>
    <name type="ordered locus">Mext_2073</name>
</gene>
<feature type="chain" id="PRO_0000352005" description="Small ribosomal subunit protein uS2">
    <location>
        <begin position="1"/>
        <end position="355"/>
    </location>
</feature>
<comment type="similarity">
    <text evidence="1">Belongs to the universal ribosomal protein uS2 family.</text>
</comment>
<organism>
    <name type="scientific">Methylorubrum extorquens (strain PA1)</name>
    <name type="common">Methylobacterium extorquens</name>
    <dbReference type="NCBI Taxonomy" id="419610"/>
    <lineage>
        <taxon>Bacteria</taxon>
        <taxon>Pseudomonadati</taxon>
        <taxon>Pseudomonadota</taxon>
        <taxon>Alphaproteobacteria</taxon>
        <taxon>Hyphomicrobiales</taxon>
        <taxon>Methylobacteriaceae</taxon>
        <taxon>Methylorubrum</taxon>
    </lineage>
</organism>
<keyword id="KW-0687">Ribonucleoprotein</keyword>
<keyword id="KW-0689">Ribosomal protein</keyword>
<protein>
    <recommendedName>
        <fullName evidence="1">Small ribosomal subunit protein uS2</fullName>
    </recommendedName>
    <alternativeName>
        <fullName evidence="2">30S ribosomal protein S2</fullName>
    </alternativeName>
</protein>
<reference key="1">
    <citation type="submission" date="2007-12" db="EMBL/GenBank/DDBJ databases">
        <title>Complete sequence of Methylobacterium extorquens PA1.</title>
        <authorList>
            <consortium name="US DOE Joint Genome Institute"/>
            <person name="Copeland A."/>
            <person name="Lucas S."/>
            <person name="Lapidus A."/>
            <person name="Barry K."/>
            <person name="Glavina del Rio T."/>
            <person name="Dalin E."/>
            <person name="Tice H."/>
            <person name="Pitluck S."/>
            <person name="Saunders E."/>
            <person name="Brettin T."/>
            <person name="Bruce D."/>
            <person name="Detter J.C."/>
            <person name="Han C."/>
            <person name="Schmutz J."/>
            <person name="Larimer F."/>
            <person name="Land M."/>
            <person name="Hauser L."/>
            <person name="Kyrpides N."/>
            <person name="Kim E."/>
            <person name="Marx C."/>
            <person name="Richardson P."/>
        </authorList>
    </citation>
    <scope>NUCLEOTIDE SEQUENCE [LARGE SCALE GENOMIC DNA]</scope>
    <source>
        <strain>PA1</strain>
    </source>
</reference>
<name>RS2_METEP</name>
<proteinExistence type="inferred from homology"/>
<sequence length="355" mass="38105">MAVDFSMRQLLEAGAHFGHQSHRWNPKMQPYIFGTRNNIHIIDLAQTVPALHAALQAVSDTVARGGRVLFVGTKRQAADSIAEAAKRSAQYYVNSRWLGGMLTNWKTISGSIQRLRKVDETLEGGAVGLTKKERLMLTREKDKLEKALGGIKDMGGVPDLLFVIDTNKEQLAIKEAQRLGIPVAAIVDTNCNPDGISYIVPANDDAGRAIALYCDLIARAAIEGIGRGQGALGLDVGASEEPTAEELPPANDDVAVSVASDAIAPADVAALAESTEHFEQLAAPRGAPDDLTKLNGVGPQLVQKLNDAGVWHYWQIAAMQPEDVAKLDADLKLNGRFARDGWVEQSRAFVEASAA</sequence>
<evidence type="ECO:0000255" key="1">
    <source>
        <dbReference type="HAMAP-Rule" id="MF_00291"/>
    </source>
</evidence>
<evidence type="ECO:0000305" key="2"/>